<dbReference type="EC" id="3.6.4.-" evidence="1"/>
<dbReference type="EMBL" id="AE001363">
    <property type="protein sequence ID" value="AAD18533.1"/>
    <property type="molecule type" value="Genomic_DNA"/>
</dbReference>
<dbReference type="EMBL" id="AE002161">
    <property type="protein sequence ID" value="AAF38214.1"/>
    <property type="molecule type" value="Genomic_DNA"/>
</dbReference>
<dbReference type="EMBL" id="BA000008">
    <property type="protein sequence ID" value="BAA98598.1"/>
    <property type="molecule type" value="Genomic_DNA"/>
</dbReference>
<dbReference type="EMBL" id="AE009440">
    <property type="protein sequence ID" value="AAP98333.1"/>
    <property type="molecule type" value="Genomic_DNA"/>
</dbReference>
<dbReference type="PIR" id="A81586">
    <property type="entry name" value="A81586"/>
</dbReference>
<dbReference type="PIR" id="D72084">
    <property type="entry name" value="D72084"/>
</dbReference>
<dbReference type="PIR" id="D86539">
    <property type="entry name" value="D86539"/>
</dbReference>
<dbReference type="RefSeq" id="NP_224590.1">
    <property type="nucleotide sequence ID" value="NC_000922.1"/>
</dbReference>
<dbReference type="RefSeq" id="WP_010883033.1">
    <property type="nucleotide sequence ID" value="NZ_LN847257.1"/>
</dbReference>
<dbReference type="RefSeq" id="WP_010892041.1">
    <property type="nucleotide sequence ID" value="NZ_LN846995.1"/>
</dbReference>
<dbReference type="SMR" id="Q9Z8F3"/>
<dbReference type="STRING" id="406984.CPK_ORF00900"/>
<dbReference type="GeneID" id="45050437"/>
<dbReference type="KEGG" id="cpa:CP_0365"/>
<dbReference type="KEGG" id="cpj:ruvB"/>
<dbReference type="KEGG" id="cpn:CPn_0390"/>
<dbReference type="KEGG" id="cpt:CpB0402"/>
<dbReference type="PATRIC" id="fig|115713.3.peg.432"/>
<dbReference type="eggNOG" id="COG2255">
    <property type="taxonomic scope" value="Bacteria"/>
</dbReference>
<dbReference type="HOGENOM" id="CLU_055599_1_0_0"/>
<dbReference type="OrthoDB" id="9804478at2"/>
<dbReference type="Proteomes" id="UP000000583">
    <property type="component" value="Chromosome"/>
</dbReference>
<dbReference type="Proteomes" id="UP000000801">
    <property type="component" value="Chromosome"/>
</dbReference>
<dbReference type="GO" id="GO:0005737">
    <property type="term" value="C:cytoplasm"/>
    <property type="evidence" value="ECO:0007669"/>
    <property type="project" value="UniProtKB-SubCell"/>
</dbReference>
<dbReference type="GO" id="GO:0048476">
    <property type="term" value="C:Holliday junction resolvase complex"/>
    <property type="evidence" value="ECO:0007669"/>
    <property type="project" value="UniProtKB-UniRule"/>
</dbReference>
<dbReference type="GO" id="GO:0005524">
    <property type="term" value="F:ATP binding"/>
    <property type="evidence" value="ECO:0007669"/>
    <property type="project" value="UniProtKB-UniRule"/>
</dbReference>
<dbReference type="GO" id="GO:0016887">
    <property type="term" value="F:ATP hydrolysis activity"/>
    <property type="evidence" value="ECO:0007669"/>
    <property type="project" value="InterPro"/>
</dbReference>
<dbReference type="GO" id="GO:0000400">
    <property type="term" value="F:four-way junction DNA binding"/>
    <property type="evidence" value="ECO:0007669"/>
    <property type="project" value="UniProtKB-UniRule"/>
</dbReference>
<dbReference type="GO" id="GO:0009378">
    <property type="term" value="F:four-way junction helicase activity"/>
    <property type="evidence" value="ECO:0007669"/>
    <property type="project" value="InterPro"/>
</dbReference>
<dbReference type="GO" id="GO:0006310">
    <property type="term" value="P:DNA recombination"/>
    <property type="evidence" value="ECO:0007669"/>
    <property type="project" value="UniProtKB-UniRule"/>
</dbReference>
<dbReference type="GO" id="GO:0006281">
    <property type="term" value="P:DNA repair"/>
    <property type="evidence" value="ECO:0007669"/>
    <property type="project" value="UniProtKB-UniRule"/>
</dbReference>
<dbReference type="CDD" id="cd00009">
    <property type="entry name" value="AAA"/>
    <property type="match status" value="1"/>
</dbReference>
<dbReference type="Gene3D" id="1.10.8.60">
    <property type="match status" value="1"/>
</dbReference>
<dbReference type="Gene3D" id="3.40.50.300">
    <property type="entry name" value="P-loop containing nucleotide triphosphate hydrolases"/>
    <property type="match status" value="1"/>
</dbReference>
<dbReference type="Gene3D" id="1.10.10.10">
    <property type="entry name" value="Winged helix-like DNA-binding domain superfamily/Winged helix DNA-binding domain"/>
    <property type="match status" value="1"/>
</dbReference>
<dbReference type="HAMAP" id="MF_00016">
    <property type="entry name" value="DNA_HJ_migration_RuvB"/>
    <property type="match status" value="1"/>
</dbReference>
<dbReference type="InterPro" id="IPR003593">
    <property type="entry name" value="AAA+_ATPase"/>
</dbReference>
<dbReference type="InterPro" id="IPR041445">
    <property type="entry name" value="AAA_lid_4"/>
</dbReference>
<dbReference type="InterPro" id="IPR004605">
    <property type="entry name" value="DNA_helicase_Holl-junc_RuvB"/>
</dbReference>
<dbReference type="InterPro" id="IPR027417">
    <property type="entry name" value="P-loop_NTPase"/>
</dbReference>
<dbReference type="InterPro" id="IPR008824">
    <property type="entry name" value="RuvB-like_N"/>
</dbReference>
<dbReference type="InterPro" id="IPR008823">
    <property type="entry name" value="RuvB_C"/>
</dbReference>
<dbReference type="InterPro" id="IPR036388">
    <property type="entry name" value="WH-like_DNA-bd_sf"/>
</dbReference>
<dbReference type="InterPro" id="IPR036390">
    <property type="entry name" value="WH_DNA-bd_sf"/>
</dbReference>
<dbReference type="NCBIfam" id="NF000868">
    <property type="entry name" value="PRK00080.1"/>
    <property type="match status" value="1"/>
</dbReference>
<dbReference type="NCBIfam" id="TIGR00635">
    <property type="entry name" value="ruvB"/>
    <property type="match status" value="1"/>
</dbReference>
<dbReference type="PANTHER" id="PTHR42848">
    <property type="match status" value="1"/>
</dbReference>
<dbReference type="PANTHER" id="PTHR42848:SF1">
    <property type="entry name" value="HOLLIDAY JUNCTION BRANCH MIGRATION COMPLEX SUBUNIT RUVB"/>
    <property type="match status" value="1"/>
</dbReference>
<dbReference type="Pfam" id="PF17864">
    <property type="entry name" value="AAA_lid_4"/>
    <property type="match status" value="1"/>
</dbReference>
<dbReference type="Pfam" id="PF05491">
    <property type="entry name" value="RuvB_C"/>
    <property type="match status" value="1"/>
</dbReference>
<dbReference type="Pfam" id="PF05496">
    <property type="entry name" value="RuvB_N"/>
    <property type="match status" value="1"/>
</dbReference>
<dbReference type="SMART" id="SM00382">
    <property type="entry name" value="AAA"/>
    <property type="match status" value="1"/>
</dbReference>
<dbReference type="SUPFAM" id="SSF52540">
    <property type="entry name" value="P-loop containing nucleoside triphosphate hydrolases"/>
    <property type="match status" value="1"/>
</dbReference>
<dbReference type="SUPFAM" id="SSF46785">
    <property type="entry name" value="Winged helix' DNA-binding domain"/>
    <property type="match status" value="1"/>
</dbReference>
<keyword id="KW-0067">ATP-binding</keyword>
<keyword id="KW-0963">Cytoplasm</keyword>
<keyword id="KW-0227">DNA damage</keyword>
<keyword id="KW-0233">DNA recombination</keyword>
<keyword id="KW-0234">DNA repair</keyword>
<keyword id="KW-0238">DNA-binding</keyword>
<keyword id="KW-0378">Hydrolase</keyword>
<keyword id="KW-0547">Nucleotide-binding</keyword>
<reference key="1">
    <citation type="journal article" date="1999" name="Nat. Genet.">
        <title>Comparative genomes of Chlamydia pneumoniae and C. trachomatis.</title>
        <authorList>
            <person name="Kalman S."/>
            <person name="Mitchell W.P."/>
            <person name="Marathe R."/>
            <person name="Lammel C.J."/>
            <person name="Fan J."/>
            <person name="Hyman R.W."/>
            <person name="Olinger L."/>
            <person name="Grimwood J."/>
            <person name="Davis R.W."/>
            <person name="Stephens R.S."/>
        </authorList>
    </citation>
    <scope>NUCLEOTIDE SEQUENCE [LARGE SCALE GENOMIC DNA]</scope>
    <source>
        <strain>CWL029</strain>
    </source>
</reference>
<reference key="2">
    <citation type="journal article" date="2000" name="Nucleic Acids Res.">
        <title>Genome sequences of Chlamydia trachomatis MoPn and Chlamydia pneumoniae AR39.</title>
        <authorList>
            <person name="Read T.D."/>
            <person name="Brunham R.C."/>
            <person name="Shen C."/>
            <person name="Gill S.R."/>
            <person name="Heidelberg J.F."/>
            <person name="White O."/>
            <person name="Hickey E.K."/>
            <person name="Peterson J.D."/>
            <person name="Utterback T.R."/>
            <person name="Berry K.J."/>
            <person name="Bass S."/>
            <person name="Linher K.D."/>
            <person name="Weidman J.F."/>
            <person name="Khouri H.M."/>
            <person name="Craven B."/>
            <person name="Bowman C."/>
            <person name="Dodson R.J."/>
            <person name="Gwinn M.L."/>
            <person name="Nelson W.C."/>
            <person name="DeBoy R.T."/>
            <person name="Kolonay J.F."/>
            <person name="McClarty G."/>
            <person name="Salzberg S.L."/>
            <person name="Eisen J.A."/>
            <person name="Fraser C.M."/>
        </authorList>
    </citation>
    <scope>NUCLEOTIDE SEQUENCE [LARGE SCALE GENOMIC DNA]</scope>
    <source>
        <strain>AR39</strain>
    </source>
</reference>
<reference key="3">
    <citation type="journal article" date="2000" name="Nucleic Acids Res.">
        <title>Comparison of whole genome sequences of Chlamydia pneumoniae J138 from Japan and CWL029 from USA.</title>
        <authorList>
            <person name="Shirai M."/>
            <person name="Hirakawa H."/>
            <person name="Kimoto M."/>
            <person name="Tabuchi M."/>
            <person name="Kishi F."/>
            <person name="Ouchi K."/>
            <person name="Shiba T."/>
            <person name="Ishii K."/>
            <person name="Hattori M."/>
            <person name="Kuhara S."/>
            <person name="Nakazawa T."/>
        </authorList>
    </citation>
    <scope>NUCLEOTIDE SEQUENCE [LARGE SCALE GENOMIC DNA]</scope>
    <source>
        <strain>J138</strain>
    </source>
</reference>
<reference key="4">
    <citation type="submission" date="2002-05" db="EMBL/GenBank/DDBJ databases">
        <title>The genome sequence of Chlamydia pneumoniae TW183 and comparison with other Chlamydia strains based on whole genome sequence analysis.</title>
        <authorList>
            <person name="Geng M.M."/>
            <person name="Schuhmacher A."/>
            <person name="Muehldorfer I."/>
            <person name="Bensch K.W."/>
            <person name="Schaefer K.P."/>
            <person name="Schneider S."/>
            <person name="Pohl T."/>
            <person name="Essig A."/>
            <person name="Marre R."/>
            <person name="Melchers K."/>
        </authorList>
    </citation>
    <scope>NUCLEOTIDE SEQUENCE [LARGE SCALE GENOMIC DNA]</scope>
    <source>
        <strain>TW-183</strain>
    </source>
</reference>
<proteinExistence type="inferred from homology"/>
<name>RUVB_CHLPN</name>
<comment type="function">
    <text evidence="1">The RuvA-RuvB-RuvC complex processes Holliday junction (HJ) DNA during genetic recombination and DNA repair, while the RuvA-RuvB complex plays an important role in the rescue of blocked DNA replication forks via replication fork reversal (RFR). RuvA specifically binds to HJ cruciform DNA, conferring on it an open structure. The RuvB hexamer acts as an ATP-dependent pump, pulling dsDNA into and through the RuvAB complex. RuvB forms 2 homohexamers on either side of HJ DNA bound by 1 or 2 RuvA tetramers; 4 subunits per hexamer contact DNA at a time. Coordinated motions by a converter formed by DNA-disengaged RuvB subunits stimulates ATP hydrolysis and nucleotide exchange. Immobilization of the converter enables RuvB to convert the ATP-contained energy into a lever motion, pulling 2 nucleotides of DNA out of the RuvA tetramer per ATP hydrolyzed, thus driving DNA branch migration. The RuvB motors rotate together with the DNA substrate, which together with the progressing nucleotide cycle form the mechanistic basis for DNA recombination by continuous HJ branch migration. Branch migration allows RuvC to scan DNA until it finds its consensus sequence, where it cleaves and resolves cruciform DNA.</text>
</comment>
<comment type="catalytic activity">
    <reaction evidence="1">
        <text>ATP + H2O = ADP + phosphate + H(+)</text>
        <dbReference type="Rhea" id="RHEA:13065"/>
        <dbReference type="ChEBI" id="CHEBI:15377"/>
        <dbReference type="ChEBI" id="CHEBI:15378"/>
        <dbReference type="ChEBI" id="CHEBI:30616"/>
        <dbReference type="ChEBI" id="CHEBI:43474"/>
        <dbReference type="ChEBI" id="CHEBI:456216"/>
    </reaction>
</comment>
<comment type="subunit">
    <text evidence="1">Homohexamer. Forms an RuvA(8)-RuvB(12)-Holliday junction (HJ) complex. HJ DNA is sandwiched between 2 RuvA tetramers; dsDNA enters through RuvA and exits via RuvB. An RuvB hexamer assembles on each DNA strand where it exits the tetramer. Each RuvB hexamer is contacted by two RuvA subunits (via domain III) on 2 adjacent RuvB subunits; this complex drives branch migration. In the full resolvosome a probable DNA-RuvA(4)-RuvB(12)-RuvC(2) complex forms which resolves the HJ.</text>
</comment>
<comment type="subcellular location">
    <subcellularLocation>
        <location evidence="1">Cytoplasm</location>
    </subcellularLocation>
</comment>
<comment type="domain">
    <text evidence="1">Has 3 domains, the large (RuvB-L) and small ATPase (RuvB-S) domains and the C-terminal head (RuvB-H) domain. The head domain binds DNA, while the ATPase domains jointly bind ATP, ADP or are empty depending on the state of the subunit in the translocation cycle. During a single DNA translocation step the structure of each domain remains the same, but their relative positions change.</text>
</comment>
<comment type="similarity">
    <text evidence="1">Belongs to the RuvB family.</text>
</comment>
<protein>
    <recommendedName>
        <fullName evidence="1">Holliday junction branch migration complex subunit RuvB</fullName>
        <ecNumber evidence="1">3.6.4.-</ecNumber>
    </recommendedName>
</protein>
<accession>Q9Z8F3</accession>
<accession>Q9JRV2</accession>
<evidence type="ECO:0000255" key="1">
    <source>
        <dbReference type="HAMAP-Rule" id="MF_00016"/>
    </source>
</evidence>
<organism>
    <name type="scientific">Chlamydia pneumoniae</name>
    <name type="common">Chlamydophila pneumoniae</name>
    <dbReference type="NCBI Taxonomy" id="83558"/>
    <lineage>
        <taxon>Bacteria</taxon>
        <taxon>Pseudomonadati</taxon>
        <taxon>Chlamydiota</taxon>
        <taxon>Chlamydiia</taxon>
        <taxon>Chlamydiales</taxon>
        <taxon>Chlamydiaceae</taxon>
        <taxon>Chlamydia/Chlamydophila group</taxon>
        <taxon>Chlamydia</taxon>
    </lineage>
</organism>
<gene>
    <name evidence="1" type="primary">ruvB</name>
    <name type="ordered locus">CPn_0390</name>
    <name type="ordered locus">CP_0365</name>
    <name type="ordered locus">CpB0402</name>
</gene>
<sequence length="337" mass="37398">MTHQVAVLHQDKKFDVSLRPKGLEEFYGQHHLKERLDLFLCAALQRGEVPGHCLFFGPPGLGKTSLAHIVAYTVGKGLVLASGPQLIKPSDLLGLLTSLQEGDVFFIDEIHRMGKVAEEYLYSAMEDFKVDITIDSGPGARSVRVDLAPFTLVGATTRSGMLSEPLRTRFAFSARLSYYSDQDLKEILVRSSHLLGIEADSSALLEIAKRSRGTPRLANHLLRWVRDFAQIREGNCINGDVAEKALAMLLIDDWGLNEIDIKLLTTIIDYYQGGPVGIKTLSVAVGEDIKTLEDVYEPFLILKGFIKKTPRGRMVTQLAYDHLKRHAKNLLSLGEGQ</sequence>
<feature type="chain" id="PRO_0000165515" description="Holliday junction branch migration complex subunit RuvB">
    <location>
        <begin position="1"/>
        <end position="337"/>
    </location>
</feature>
<feature type="region of interest" description="Large ATPase domain (RuvB-L)" evidence="1">
    <location>
        <begin position="1"/>
        <end position="179"/>
    </location>
</feature>
<feature type="region of interest" description="Small ATPAse domain (RuvB-S)" evidence="1">
    <location>
        <begin position="180"/>
        <end position="250"/>
    </location>
</feature>
<feature type="region of interest" description="Head domain (RuvB-H)" evidence="1">
    <location>
        <begin position="253"/>
        <end position="337"/>
    </location>
</feature>
<feature type="binding site" evidence="1">
    <location>
        <position position="18"/>
    </location>
    <ligand>
        <name>ATP</name>
        <dbReference type="ChEBI" id="CHEBI:30616"/>
    </ligand>
</feature>
<feature type="binding site" evidence="1">
    <location>
        <position position="19"/>
    </location>
    <ligand>
        <name>ATP</name>
        <dbReference type="ChEBI" id="CHEBI:30616"/>
    </ligand>
</feature>
<feature type="binding site" evidence="1">
    <location>
        <position position="60"/>
    </location>
    <ligand>
        <name>ATP</name>
        <dbReference type="ChEBI" id="CHEBI:30616"/>
    </ligand>
</feature>
<feature type="binding site" evidence="1">
    <location>
        <position position="63"/>
    </location>
    <ligand>
        <name>ATP</name>
        <dbReference type="ChEBI" id="CHEBI:30616"/>
    </ligand>
</feature>
<feature type="binding site" evidence="1">
    <location>
        <position position="64"/>
    </location>
    <ligand>
        <name>ATP</name>
        <dbReference type="ChEBI" id="CHEBI:30616"/>
    </ligand>
</feature>
<feature type="binding site" evidence="1">
    <location>
        <position position="64"/>
    </location>
    <ligand>
        <name>Mg(2+)</name>
        <dbReference type="ChEBI" id="CHEBI:18420"/>
    </ligand>
</feature>
<feature type="binding site" evidence="1">
    <location>
        <position position="65"/>
    </location>
    <ligand>
        <name>ATP</name>
        <dbReference type="ChEBI" id="CHEBI:30616"/>
    </ligand>
</feature>
<feature type="binding site" evidence="1">
    <location>
        <begin position="126"/>
        <end position="128"/>
    </location>
    <ligand>
        <name>ATP</name>
        <dbReference type="ChEBI" id="CHEBI:30616"/>
    </ligand>
</feature>
<feature type="binding site" evidence="1">
    <location>
        <position position="169"/>
    </location>
    <ligand>
        <name>ATP</name>
        <dbReference type="ChEBI" id="CHEBI:30616"/>
    </ligand>
</feature>
<feature type="binding site" evidence="1">
    <location>
        <position position="179"/>
    </location>
    <ligand>
        <name>ATP</name>
        <dbReference type="ChEBI" id="CHEBI:30616"/>
    </ligand>
</feature>
<feature type="binding site" evidence="1">
    <location>
        <position position="216"/>
    </location>
    <ligand>
        <name>ATP</name>
        <dbReference type="ChEBI" id="CHEBI:30616"/>
    </ligand>
</feature>
<feature type="binding site" evidence="1">
    <location>
        <position position="308"/>
    </location>
    <ligand>
        <name>DNA</name>
        <dbReference type="ChEBI" id="CHEBI:16991"/>
    </ligand>
</feature>
<feature type="binding site" evidence="1">
    <location>
        <position position="313"/>
    </location>
    <ligand>
        <name>DNA</name>
        <dbReference type="ChEBI" id="CHEBI:16991"/>
    </ligand>
</feature>
<feature type="sequence variant" description="In strain: CWL029 and TW-183.">
    <original>T</original>
    <variation>A</variation>
    <location>
        <position position="168"/>
    </location>
</feature>